<feature type="chain" id="PRO_0000300789" description="Homoserine kinase">
    <location>
        <begin position="1"/>
        <end position="332"/>
    </location>
</feature>
<reference key="1">
    <citation type="submission" date="2005-10" db="EMBL/GenBank/DDBJ databases">
        <title>Complete sequence of chromosome 2 of Burkholderia sp. 383.</title>
        <authorList>
            <consortium name="US DOE Joint Genome Institute"/>
            <person name="Copeland A."/>
            <person name="Lucas S."/>
            <person name="Lapidus A."/>
            <person name="Barry K."/>
            <person name="Detter J.C."/>
            <person name="Glavina T."/>
            <person name="Hammon N."/>
            <person name="Israni S."/>
            <person name="Pitluck S."/>
            <person name="Chain P."/>
            <person name="Malfatti S."/>
            <person name="Shin M."/>
            <person name="Vergez L."/>
            <person name="Schmutz J."/>
            <person name="Larimer F."/>
            <person name="Land M."/>
            <person name="Kyrpides N."/>
            <person name="Lykidis A."/>
            <person name="Richardson P."/>
        </authorList>
    </citation>
    <scope>NUCLEOTIDE SEQUENCE [LARGE SCALE GENOMIC DNA]</scope>
    <source>
        <strain>ATCC 17760 / DSM 23089 / LMG 22485 / NCIMB 9086 / R18194 / 383</strain>
    </source>
</reference>
<protein>
    <recommendedName>
        <fullName evidence="1">Homoserine kinase</fullName>
        <shortName evidence="1">HK</shortName>
        <shortName evidence="1">HSK</shortName>
        <ecNumber evidence="1">2.7.1.39</ecNumber>
    </recommendedName>
</protein>
<sequence length="332" mass="37266">MAVFTAVSDSDLAQWMRHYELGDVLAFRGIPSGIENSNFFLTTTRGEYVLTIFEKLTAEQLPFYLDLMSHLAGHGVPVPDPIPRDDGALFGMLHGKPAAIVTKLDGSAELAPGVEHCIEVGQMLARLHLAGRDYPRNQPNLRSLPWWQENVPAIVPFITDEQRALLEGELVHQAGFFASDDYAALPAGPCHCDLFRDNVLFAHAAPDTGHDVRLGGFFDFYFAGCDKWLFDVAVTVNDWCVDLATGVLDVARADALLRAYQTVRPFTAEERRHWSDMLRAGAYRFWVSRLYDFYLPRAAEMLKPHDPGHFERILRERIAHTPALPEIQTACN</sequence>
<gene>
    <name evidence="1" type="primary">thrB</name>
    <name type="ordered locus">Bcep18194_B2229</name>
</gene>
<keyword id="KW-0028">Amino-acid biosynthesis</keyword>
<keyword id="KW-0067">ATP-binding</keyword>
<keyword id="KW-0418">Kinase</keyword>
<keyword id="KW-0547">Nucleotide-binding</keyword>
<keyword id="KW-0791">Threonine biosynthesis</keyword>
<keyword id="KW-0808">Transferase</keyword>
<accession>Q393M6</accession>
<name>KHSE_BURL3</name>
<evidence type="ECO:0000255" key="1">
    <source>
        <dbReference type="HAMAP-Rule" id="MF_00301"/>
    </source>
</evidence>
<proteinExistence type="inferred from homology"/>
<dbReference type="EC" id="2.7.1.39" evidence="1"/>
<dbReference type="EMBL" id="CP000152">
    <property type="protein sequence ID" value="ABB12340.1"/>
    <property type="molecule type" value="Genomic_DNA"/>
</dbReference>
<dbReference type="RefSeq" id="WP_011355822.1">
    <property type="nucleotide sequence ID" value="NC_007511.1"/>
</dbReference>
<dbReference type="SMR" id="Q393M6"/>
<dbReference type="GeneID" id="45098554"/>
<dbReference type="KEGG" id="bur:Bcep18194_B2229"/>
<dbReference type="PATRIC" id="fig|482957.22.peg.5989"/>
<dbReference type="HOGENOM" id="CLU_053300_0_0_4"/>
<dbReference type="UniPathway" id="UPA00050">
    <property type="reaction ID" value="UER00064"/>
</dbReference>
<dbReference type="Proteomes" id="UP000002705">
    <property type="component" value="Chromosome 2"/>
</dbReference>
<dbReference type="GO" id="GO:0005524">
    <property type="term" value="F:ATP binding"/>
    <property type="evidence" value="ECO:0007669"/>
    <property type="project" value="UniProtKB-KW"/>
</dbReference>
<dbReference type="GO" id="GO:0004413">
    <property type="term" value="F:homoserine kinase activity"/>
    <property type="evidence" value="ECO:0007669"/>
    <property type="project" value="UniProtKB-UniRule"/>
</dbReference>
<dbReference type="GO" id="GO:0009088">
    <property type="term" value="P:threonine biosynthetic process"/>
    <property type="evidence" value="ECO:0007669"/>
    <property type="project" value="UniProtKB-UniRule"/>
</dbReference>
<dbReference type="CDD" id="cd05153">
    <property type="entry name" value="HomoserineK_II"/>
    <property type="match status" value="1"/>
</dbReference>
<dbReference type="Gene3D" id="3.90.1200.10">
    <property type="match status" value="1"/>
</dbReference>
<dbReference type="Gene3D" id="3.30.200.20">
    <property type="entry name" value="Phosphorylase Kinase, domain 1"/>
    <property type="match status" value="1"/>
</dbReference>
<dbReference type="HAMAP" id="MF_00301">
    <property type="entry name" value="Homoser_kinase_2"/>
    <property type="match status" value="1"/>
</dbReference>
<dbReference type="InterPro" id="IPR002575">
    <property type="entry name" value="Aminoglycoside_PTrfase"/>
</dbReference>
<dbReference type="InterPro" id="IPR005280">
    <property type="entry name" value="Homoserine_kinase_II"/>
</dbReference>
<dbReference type="InterPro" id="IPR011009">
    <property type="entry name" value="Kinase-like_dom_sf"/>
</dbReference>
<dbReference type="InterPro" id="IPR050249">
    <property type="entry name" value="Pseudomonas-type_ThrB"/>
</dbReference>
<dbReference type="NCBIfam" id="NF003558">
    <property type="entry name" value="PRK05231.1"/>
    <property type="match status" value="1"/>
</dbReference>
<dbReference type="NCBIfam" id="TIGR00938">
    <property type="entry name" value="thrB_alt"/>
    <property type="match status" value="1"/>
</dbReference>
<dbReference type="PANTHER" id="PTHR21064:SF6">
    <property type="entry name" value="AMINOGLYCOSIDE PHOSPHOTRANSFERASE DOMAIN-CONTAINING PROTEIN"/>
    <property type="match status" value="1"/>
</dbReference>
<dbReference type="PANTHER" id="PTHR21064">
    <property type="entry name" value="AMINOGLYCOSIDE PHOSPHOTRANSFERASE DOMAIN-CONTAINING PROTEIN-RELATED"/>
    <property type="match status" value="1"/>
</dbReference>
<dbReference type="Pfam" id="PF01636">
    <property type="entry name" value="APH"/>
    <property type="match status" value="1"/>
</dbReference>
<dbReference type="SUPFAM" id="SSF56112">
    <property type="entry name" value="Protein kinase-like (PK-like)"/>
    <property type="match status" value="1"/>
</dbReference>
<comment type="catalytic activity">
    <reaction evidence="1">
        <text>L-homoserine + ATP = O-phospho-L-homoserine + ADP + H(+)</text>
        <dbReference type="Rhea" id="RHEA:13985"/>
        <dbReference type="ChEBI" id="CHEBI:15378"/>
        <dbReference type="ChEBI" id="CHEBI:30616"/>
        <dbReference type="ChEBI" id="CHEBI:57476"/>
        <dbReference type="ChEBI" id="CHEBI:57590"/>
        <dbReference type="ChEBI" id="CHEBI:456216"/>
        <dbReference type="EC" id="2.7.1.39"/>
    </reaction>
</comment>
<comment type="pathway">
    <text evidence="1">Amino-acid biosynthesis; L-threonine biosynthesis; L-threonine from L-aspartate: step 4/5.</text>
</comment>
<comment type="similarity">
    <text evidence="1">Belongs to the pseudomonas-type ThrB family.</text>
</comment>
<organism>
    <name type="scientific">Burkholderia lata (strain ATCC 17760 / DSM 23089 / LMG 22485 / NCIMB 9086 / R18194 / 383)</name>
    <dbReference type="NCBI Taxonomy" id="482957"/>
    <lineage>
        <taxon>Bacteria</taxon>
        <taxon>Pseudomonadati</taxon>
        <taxon>Pseudomonadota</taxon>
        <taxon>Betaproteobacteria</taxon>
        <taxon>Burkholderiales</taxon>
        <taxon>Burkholderiaceae</taxon>
        <taxon>Burkholderia</taxon>
        <taxon>Burkholderia cepacia complex</taxon>
    </lineage>
</organism>